<keyword id="KW-0687">Ribonucleoprotein</keyword>
<keyword id="KW-0689">Ribosomal protein</keyword>
<keyword id="KW-0694">RNA-binding</keyword>
<keyword id="KW-0699">rRNA-binding</keyword>
<feature type="chain" id="PRO_1000128558" description="Small ribosomal subunit protein uS14">
    <location>
        <begin position="1"/>
        <end position="101"/>
    </location>
</feature>
<reference key="1">
    <citation type="journal article" date="2005" name="Nucleic Acids Res.">
        <title>The genome sequence of Salmonella enterica serovar Choleraesuis, a highly invasive and resistant zoonotic pathogen.</title>
        <authorList>
            <person name="Chiu C.-H."/>
            <person name="Tang P."/>
            <person name="Chu C."/>
            <person name="Hu S."/>
            <person name="Bao Q."/>
            <person name="Yu J."/>
            <person name="Chou Y.-Y."/>
            <person name="Wang H.-S."/>
            <person name="Lee Y.-S."/>
        </authorList>
    </citation>
    <scope>NUCLEOTIDE SEQUENCE [LARGE SCALE GENOMIC DNA]</scope>
    <source>
        <strain>SC-B67</strain>
    </source>
</reference>
<protein>
    <recommendedName>
        <fullName evidence="1">Small ribosomal subunit protein uS14</fullName>
    </recommendedName>
    <alternativeName>
        <fullName evidence="2">30S ribosomal protein S14</fullName>
    </alternativeName>
</protein>
<gene>
    <name evidence="1" type="primary">rpsN</name>
    <name type="ordered locus">SCH_3361</name>
</gene>
<proteinExistence type="inferred from homology"/>
<organism>
    <name type="scientific">Salmonella choleraesuis (strain SC-B67)</name>
    <dbReference type="NCBI Taxonomy" id="321314"/>
    <lineage>
        <taxon>Bacteria</taxon>
        <taxon>Pseudomonadati</taxon>
        <taxon>Pseudomonadota</taxon>
        <taxon>Gammaproteobacteria</taxon>
        <taxon>Enterobacterales</taxon>
        <taxon>Enterobacteriaceae</taxon>
        <taxon>Salmonella</taxon>
    </lineage>
</organism>
<evidence type="ECO:0000255" key="1">
    <source>
        <dbReference type="HAMAP-Rule" id="MF_00537"/>
    </source>
</evidence>
<evidence type="ECO:0000305" key="2"/>
<comment type="function">
    <text evidence="1">Binds 16S rRNA, required for the assembly of 30S particles and may also be responsible for determining the conformation of the 16S rRNA at the A site.</text>
</comment>
<comment type="subunit">
    <text evidence="1">Part of the 30S ribosomal subunit. Contacts proteins S3 and S10.</text>
</comment>
<comment type="similarity">
    <text evidence="1">Belongs to the universal ribosomal protein uS14 family.</text>
</comment>
<accession>Q57J45</accession>
<name>RS14_SALCH</name>
<dbReference type="EMBL" id="AE017220">
    <property type="protein sequence ID" value="AAX67267.1"/>
    <property type="molecule type" value="Genomic_DNA"/>
</dbReference>
<dbReference type="RefSeq" id="WP_001118932.1">
    <property type="nucleotide sequence ID" value="NC_006905.1"/>
</dbReference>
<dbReference type="SMR" id="Q57J45"/>
<dbReference type="GeneID" id="66757762"/>
<dbReference type="KEGG" id="sec:SCH_3361"/>
<dbReference type="HOGENOM" id="CLU_139869_0_1_6"/>
<dbReference type="Proteomes" id="UP000000538">
    <property type="component" value="Chromosome"/>
</dbReference>
<dbReference type="GO" id="GO:0005737">
    <property type="term" value="C:cytoplasm"/>
    <property type="evidence" value="ECO:0007669"/>
    <property type="project" value="UniProtKB-ARBA"/>
</dbReference>
<dbReference type="GO" id="GO:0015935">
    <property type="term" value="C:small ribosomal subunit"/>
    <property type="evidence" value="ECO:0007669"/>
    <property type="project" value="TreeGrafter"/>
</dbReference>
<dbReference type="GO" id="GO:0019843">
    <property type="term" value="F:rRNA binding"/>
    <property type="evidence" value="ECO:0007669"/>
    <property type="project" value="UniProtKB-UniRule"/>
</dbReference>
<dbReference type="GO" id="GO:0003735">
    <property type="term" value="F:structural constituent of ribosome"/>
    <property type="evidence" value="ECO:0007669"/>
    <property type="project" value="InterPro"/>
</dbReference>
<dbReference type="GO" id="GO:0006412">
    <property type="term" value="P:translation"/>
    <property type="evidence" value="ECO:0007669"/>
    <property type="project" value="UniProtKB-UniRule"/>
</dbReference>
<dbReference type="FunFam" id="1.10.287.1480:FF:000001">
    <property type="entry name" value="30S ribosomal protein S14"/>
    <property type="match status" value="1"/>
</dbReference>
<dbReference type="Gene3D" id="1.10.287.1480">
    <property type="match status" value="1"/>
</dbReference>
<dbReference type="HAMAP" id="MF_00537">
    <property type="entry name" value="Ribosomal_uS14_1"/>
    <property type="match status" value="1"/>
</dbReference>
<dbReference type="InterPro" id="IPR001209">
    <property type="entry name" value="Ribosomal_uS14"/>
</dbReference>
<dbReference type="InterPro" id="IPR023036">
    <property type="entry name" value="Ribosomal_uS14_bac/plastid"/>
</dbReference>
<dbReference type="InterPro" id="IPR018271">
    <property type="entry name" value="Ribosomal_uS14_CS"/>
</dbReference>
<dbReference type="NCBIfam" id="NF006477">
    <property type="entry name" value="PRK08881.1"/>
    <property type="match status" value="1"/>
</dbReference>
<dbReference type="PANTHER" id="PTHR19836">
    <property type="entry name" value="30S RIBOSOMAL PROTEIN S14"/>
    <property type="match status" value="1"/>
</dbReference>
<dbReference type="PANTHER" id="PTHR19836:SF19">
    <property type="entry name" value="SMALL RIBOSOMAL SUBUNIT PROTEIN US14M"/>
    <property type="match status" value="1"/>
</dbReference>
<dbReference type="Pfam" id="PF00253">
    <property type="entry name" value="Ribosomal_S14"/>
    <property type="match status" value="1"/>
</dbReference>
<dbReference type="SUPFAM" id="SSF57716">
    <property type="entry name" value="Glucocorticoid receptor-like (DNA-binding domain)"/>
    <property type="match status" value="1"/>
</dbReference>
<dbReference type="PROSITE" id="PS00527">
    <property type="entry name" value="RIBOSOMAL_S14"/>
    <property type="match status" value="1"/>
</dbReference>
<sequence length="101" mass="11609">MAKQSMKAREVKRVALADKYFAKRAELKAIISDVNATDEDRWNAVLKLQTLPRDSSPSRQRNRCRQTGRPHAFLRKFGLSRIKVREAAMRGEIPGLKKASW</sequence>